<name>Y2922_MYCBO</name>
<gene>
    <name type="ordered locus">BQ2027_MB2922C</name>
</gene>
<evidence type="ECO:0000305" key="1"/>
<comment type="similarity">
    <text evidence="1">Belongs to the UPF0102 family.</text>
</comment>
<dbReference type="EMBL" id="LT708304">
    <property type="protein sequence ID" value="SIU01543.1"/>
    <property type="molecule type" value="Genomic_DNA"/>
</dbReference>
<dbReference type="RefSeq" id="NP_856567.1">
    <property type="nucleotide sequence ID" value="NC_002945.3"/>
</dbReference>
<dbReference type="RefSeq" id="WP_003414702.1">
    <property type="nucleotide sequence ID" value="NC_002945.4"/>
</dbReference>
<dbReference type="SMR" id="P67231"/>
<dbReference type="KEGG" id="mbo:BQ2027_MB2922C"/>
<dbReference type="PATRIC" id="fig|233413.5.peg.3208"/>
<dbReference type="Proteomes" id="UP000001419">
    <property type="component" value="Chromosome"/>
</dbReference>
<dbReference type="GO" id="GO:0003676">
    <property type="term" value="F:nucleic acid binding"/>
    <property type="evidence" value="ECO:0007669"/>
    <property type="project" value="InterPro"/>
</dbReference>
<dbReference type="CDD" id="cd20736">
    <property type="entry name" value="PoNe_Nuclease"/>
    <property type="match status" value="1"/>
</dbReference>
<dbReference type="Gene3D" id="3.40.1350.10">
    <property type="match status" value="1"/>
</dbReference>
<dbReference type="HAMAP" id="MF_00048">
    <property type="entry name" value="UPF0102"/>
    <property type="match status" value="1"/>
</dbReference>
<dbReference type="InterPro" id="IPR011335">
    <property type="entry name" value="Restrct_endonuc-II-like"/>
</dbReference>
<dbReference type="InterPro" id="IPR011856">
    <property type="entry name" value="tRNA_endonuc-like_dom_sf"/>
</dbReference>
<dbReference type="InterPro" id="IPR003509">
    <property type="entry name" value="UPF0102_YraN-like"/>
</dbReference>
<dbReference type="NCBIfam" id="NF009150">
    <property type="entry name" value="PRK12497.1-3"/>
    <property type="match status" value="1"/>
</dbReference>
<dbReference type="NCBIfam" id="NF009153">
    <property type="entry name" value="PRK12497.3-1"/>
    <property type="match status" value="1"/>
</dbReference>
<dbReference type="NCBIfam" id="NF009154">
    <property type="entry name" value="PRK12497.3-3"/>
    <property type="match status" value="1"/>
</dbReference>
<dbReference type="NCBIfam" id="TIGR00252">
    <property type="entry name" value="YraN family protein"/>
    <property type="match status" value="1"/>
</dbReference>
<dbReference type="PANTHER" id="PTHR34039">
    <property type="entry name" value="UPF0102 PROTEIN YRAN"/>
    <property type="match status" value="1"/>
</dbReference>
<dbReference type="PANTHER" id="PTHR34039:SF1">
    <property type="entry name" value="UPF0102 PROTEIN YRAN"/>
    <property type="match status" value="1"/>
</dbReference>
<dbReference type="Pfam" id="PF02021">
    <property type="entry name" value="UPF0102"/>
    <property type="match status" value="1"/>
</dbReference>
<dbReference type="SUPFAM" id="SSF52980">
    <property type="entry name" value="Restriction endonuclease-like"/>
    <property type="match status" value="1"/>
</dbReference>
<accession>P67231</accession>
<accession>A0A1R3Y2J5</accession>
<accession>Q10819</accession>
<accession>X2BLY4</accession>
<protein>
    <recommendedName>
        <fullName>UPF0102 protein Mb2922c</fullName>
    </recommendedName>
</protein>
<reference key="1">
    <citation type="journal article" date="2003" name="Proc. Natl. Acad. Sci. U.S.A.">
        <title>The complete genome sequence of Mycobacterium bovis.</title>
        <authorList>
            <person name="Garnier T."/>
            <person name="Eiglmeier K."/>
            <person name="Camus J.-C."/>
            <person name="Medina N."/>
            <person name="Mansoor H."/>
            <person name="Pryor M."/>
            <person name="Duthoy S."/>
            <person name="Grondin S."/>
            <person name="Lacroix C."/>
            <person name="Monsempe C."/>
            <person name="Simon S."/>
            <person name="Harris B."/>
            <person name="Atkin R."/>
            <person name="Doggett J."/>
            <person name="Mayes R."/>
            <person name="Keating L."/>
            <person name="Wheeler P.R."/>
            <person name="Parkhill J."/>
            <person name="Barrell B.G."/>
            <person name="Cole S.T."/>
            <person name="Gordon S.V."/>
            <person name="Hewinson R.G."/>
        </authorList>
    </citation>
    <scope>NUCLEOTIDE SEQUENCE [LARGE SCALE GENOMIC DNA]</scope>
    <source>
        <strain>ATCC BAA-935 / AF2122/97</strain>
    </source>
</reference>
<reference key="2">
    <citation type="journal article" date="2017" name="Genome Announc.">
        <title>Updated reference genome sequence and annotation of Mycobacterium bovis AF2122/97.</title>
        <authorList>
            <person name="Malone K.M."/>
            <person name="Farrell D."/>
            <person name="Stuber T.P."/>
            <person name="Schubert O.T."/>
            <person name="Aebersold R."/>
            <person name="Robbe-Austerman S."/>
            <person name="Gordon S.V."/>
        </authorList>
    </citation>
    <scope>NUCLEOTIDE SEQUENCE [LARGE SCALE GENOMIC DNA]</scope>
    <scope>GENOME REANNOTATION</scope>
    <source>
        <strain>ATCC BAA-935 / AF2122/97</strain>
    </source>
</reference>
<sequence length="128" mass="14224">MTTLKTMTRVQLGAMGEALAVDYLTSMGLRILNRNWRCRYGELDVIACDAATRTVVFVEVKTRTGDGYGGLAHAVTERKVRRLRRLAGLWLADQEERWAAVRIDVIGVRVGPKNSGRTPELTHLQGIG</sequence>
<proteinExistence type="inferred from homology"/>
<feature type="chain" id="PRO_0000167364" description="UPF0102 protein Mb2922c">
    <location>
        <begin position="1"/>
        <end position="128"/>
    </location>
</feature>
<organism>
    <name type="scientific">Mycobacterium bovis (strain ATCC BAA-935 / AF2122/97)</name>
    <dbReference type="NCBI Taxonomy" id="233413"/>
    <lineage>
        <taxon>Bacteria</taxon>
        <taxon>Bacillati</taxon>
        <taxon>Actinomycetota</taxon>
        <taxon>Actinomycetes</taxon>
        <taxon>Mycobacteriales</taxon>
        <taxon>Mycobacteriaceae</taxon>
        <taxon>Mycobacterium</taxon>
        <taxon>Mycobacterium tuberculosis complex</taxon>
    </lineage>
</organism>
<keyword id="KW-1185">Reference proteome</keyword>